<accession>P18075</accession>
<accession>Q9H512</accession>
<accession>Q9NTQ7</accession>
<name>BMP7_HUMAN</name>
<organism>
    <name type="scientific">Homo sapiens</name>
    <name type="common">Human</name>
    <dbReference type="NCBI Taxonomy" id="9606"/>
    <lineage>
        <taxon>Eukaryota</taxon>
        <taxon>Metazoa</taxon>
        <taxon>Chordata</taxon>
        <taxon>Craniata</taxon>
        <taxon>Vertebrata</taxon>
        <taxon>Euteleostomi</taxon>
        <taxon>Mammalia</taxon>
        <taxon>Eutheria</taxon>
        <taxon>Euarchontoglires</taxon>
        <taxon>Primates</taxon>
        <taxon>Haplorrhini</taxon>
        <taxon>Catarrhini</taxon>
        <taxon>Hominidae</taxon>
        <taxon>Homo</taxon>
    </lineage>
</organism>
<sequence length="431" mass="49313">MHVRSLRAAAPHSFVALWAPLFLLRSALADFSLDNEVHSSFIHRRLRSQERREMQREILSILGLPHRPRPHLQGKHNSAPMFMLDLYNAMAVEEGGGPGGQGFSYPYKAVFSTQGPPLASLQDSHFLTDADMVMSFVNLVEHDKEFFHPRYHHREFRFDLSKIPEGEAVTAAEFRIYKDYIRERFDNETFRISVYQVLQEHLGRESDLFLLDSRTLWASEEGWLVFDITATSNHWVVNPRHNLGLQLSVETLDGQSINPKLAGLIGRHGPQNKQPFMVAFFKATEVHFRSIRSTGSKQRSQNRSKTPKNQEALRMANVAENSSSDQRQACKKHELYVSFRDLGWQDWIIAPEGYAAYYCEGECAFPLNSYMNATNHAIVQTLVHFINPETVPKPCCAPTQLNAISVLYFDDSSNVILKKYRNMVVRACGCH</sequence>
<reference key="1">
    <citation type="journal article" date="1990" name="EMBO J.">
        <title>OP-1 cDNA encodes an osteogenic protein in the TGF-beta family.</title>
        <authorList>
            <person name="Oezkaynak E."/>
            <person name="Rueger D.C."/>
            <person name="Drier E.A."/>
            <person name="Corbett C."/>
            <person name="Ridge R.J."/>
            <person name="Sampath T.K."/>
            <person name="Oppermann H."/>
        </authorList>
    </citation>
    <scope>NUCLEOTIDE SEQUENCE [MRNA]</scope>
    <scope>PARTIAL PROTEIN SEQUENCE</scope>
    <source>
        <tissue>Placenta</tissue>
    </source>
</reference>
<reference key="2">
    <citation type="journal article" date="1990" name="Proc. Natl. Acad. Sci. U.S.A.">
        <title>Identification of transforming growth factor beta family members present in bone-inductive protein purified from bovine bone.</title>
        <authorList>
            <person name="Celeste A.J."/>
            <person name="Iannazzi J.A."/>
            <person name="Taylor R.C."/>
            <person name="Hewick R.M."/>
            <person name="Rosen V."/>
            <person name="Wang E.A."/>
            <person name="Wozney J.M."/>
        </authorList>
    </citation>
    <scope>NUCLEOTIDE SEQUENCE [MRNA]</scope>
</reference>
<reference key="3">
    <citation type="journal article" date="2001" name="Nature">
        <title>The DNA sequence and comparative analysis of human chromosome 20.</title>
        <authorList>
            <person name="Deloukas P."/>
            <person name="Matthews L.H."/>
            <person name="Ashurst J.L."/>
            <person name="Burton J."/>
            <person name="Gilbert J.G.R."/>
            <person name="Jones M."/>
            <person name="Stavrides G."/>
            <person name="Almeida J.P."/>
            <person name="Babbage A.K."/>
            <person name="Bagguley C.L."/>
            <person name="Bailey J."/>
            <person name="Barlow K.F."/>
            <person name="Bates K.N."/>
            <person name="Beard L.M."/>
            <person name="Beare D.M."/>
            <person name="Beasley O.P."/>
            <person name="Bird C.P."/>
            <person name="Blakey S.E."/>
            <person name="Bridgeman A.M."/>
            <person name="Brown A.J."/>
            <person name="Buck D."/>
            <person name="Burrill W.D."/>
            <person name="Butler A.P."/>
            <person name="Carder C."/>
            <person name="Carter N.P."/>
            <person name="Chapman J.C."/>
            <person name="Clamp M."/>
            <person name="Clark G."/>
            <person name="Clark L.N."/>
            <person name="Clark S.Y."/>
            <person name="Clee C.M."/>
            <person name="Clegg S."/>
            <person name="Cobley V.E."/>
            <person name="Collier R.E."/>
            <person name="Connor R.E."/>
            <person name="Corby N.R."/>
            <person name="Coulson A."/>
            <person name="Coville G.J."/>
            <person name="Deadman R."/>
            <person name="Dhami P.D."/>
            <person name="Dunn M."/>
            <person name="Ellington A.G."/>
            <person name="Frankland J.A."/>
            <person name="Fraser A."/>
            <person name="French L."/>
            <person name="Garner P."/>
            <person name="Grafham D.V."/>
            <person name="Griffiths C."/>
            <person name="Griffiths M.N.D."/>
            <person name="Gwilliam R."/>
            <person name="Hall R.E."/>
            <person name="Hammond S."/>
            <person name="Harley J.L."/>
            <person name="Heath P.D."/>
            <person name="Ho S."/>
            <person name="Holden J.L."/>
            <person name="Howden P.J."/>
            <person name="Huckle E."/>
            <person name="Hunt A.R."/>
            <person name="Hunt S.E."/>
            <person name="Jekosch K."/>
            <person name="Johnson C.M."/>
            <person name="Johnson D."/>
            <person name="Kay M.P."/>
            <person name="Kimberley A.M."/>
            <person name="King A."/>
            <person name="Knights A."/>
            <person name="Laird G.K."/>
            <person name="Lawlor S."/>
            <person name="Lehvaeslaiho M.H."/>
            <person name="Leversha M.A."/>
            <person name="Lloyd C."/>
            <person name="Lloyd D.M."/>
            <person name="Lovell J.D."/>
            <person name="Marsh V.L."/>
            <person name="Martin S.L."/>
            <person name="McConnachie L.J."/>
            <person name="McLay K."/>
            <person name="McMurray A.A."/>
            <person name="Milne S.A."/>
            <person name="Mistry D."/>
            <person name="Moore M.J.F."/>
            <person name="Mullikin J.C."/>
            <person name="Nickerson T."/>
            <person name="Oliver K."/>
            <person name="Parker A."/>
            <person name="Patel R."/>
            <person name="Pearce T.A.V."/>
            <person name="Peck A.I."/>
            <person name="Phillimore B.J.C.T."/>
            <person name="Prathalingam S.R."/>
            <person name="Plumb R.W."/>
            <person name="Ramsay H."/>
            <person name="Rice C.M."/>
            <person name="Ross M.T."/>
            <person name="Scott C.E."/>
            <person name="Sehra H.K."/>
            <person name="Shownkeen R."/>
            <person name="Sims S."/>
            <person name="Skuce C.D."/>
            <person name="Smith M.L."/>
            <person name="Soderlund C."/>
            <person name="Steward C.A."/>
            <person name="Sulston J.E."/>
            <person name="Swann R.M."/>
            <person name="Sycamore N."/>
            <person name="Taylor R."/>
            <person name="Tee L."/>
            <person name="Thomas D.W."/>
            <person name="Thorpe A."/>
            <person name="Tracey A."/>
            <person name="Tromans A.C."/>
            <person name="Vaudin M."/>
            <person name="Wall M."/>
            <person name="Wallis J.M."/>
            <person name="Whitehead S.L."/>
            <person name="Whittaker P."/>
            <person name="Willey D.L."/>
            <person name="Williams L."/>
            <person name="Williams S.A."/>
            <person name="Wilming L."/>
            <person name="Wray P.W."/>
            <person name="Hubbard T."/>
            <person name="Durbin R.M."/>
            <person name="Bentley D.R."/>
            <person name="Beck S."/>
            <person name="Rogers J."/>
        </authorList>
    </citation>
    <scope>NUCLEOTIDE SEQUENCE [LARGE SCALE GENOMIC DNA]</scope>
</reference>
<reference key="4">
    <citation type="journal article" date="2004" name="Genome Res.">
        <title>The status, quality, and expansion of the NIH full-length cDNA project: the Mammalian Gene Collection (MGC).</title>
        <authorList>
            <consortium name="The MGC Project Team"/>
        </authorList>
    </citation>
    <scope>NUCLEOTIDE SEQUENCE [LARGE SCALE MRNA]</scope>
    <source>
        <tissue>Brain</tissue>
    </source>
</reference>
<reference key="5">
    <citation type="journal article" date="2008" name="Protein Expr. Purif.">
        <title>Expression and characterization of a human BMP-7 variant with improved biochemical properties.</title>
        <authorList>
            <person name="Swencki-Underwood B."/>
            <person name="Mills J.K."/>
            <person name="Vennarini J."/>
            <person name="Boakye K."/>
            <person name="Luo J."/>
            <person name="Pomerantz S."/>
            <person name="Cunningham M.R."/>
            <person name="Farrell F.X."/>
            <person name="Naso M.F."/>
            <person name="Amegadzie B."/>
        </authorList>
    </citation>
    <scope>PROTEIN SEQUENCE OF 293-302</scope>
</reference>
<reference key="6">
    <citation type="journal article" date="1998" name="J. Biol. Chem.">
        <title>Specific activation of Smad1 signaling pathways by the BMP7 type I receptor, ALK2.</title>
        <authorList>
            <person name="Macias-Silva M."/>
            <person name="Hoodless P.A."/>
            <person name="Tang S.J."/>
            <person name="Buchwald M."/>
            <person name="Wrana J.L."/>
        </authorList>
    </citation>
    <scope>FUNCTION</scope>
    <scope>INTERACTION WITH ACVR1</scope>
</reference>
<reference key="7">
    <citation type="journal article" date="2004" name="Biochem. Biophys. Res. Commun.">
        <title>USAG-1: a bone morphogenetic protein antagonist abundantly expressed in the kidney.</title>
        <authorList>
            <person name="Yanagita M."/>
            <person name="Oka M."/>
            <person name="Watabe T."/>
            <person name="Iguchi H."/>
            <person name="Niida A."/>
            <person name="Takahashi S."/>
            <person name="Akiyama T."/>
            <person name="Miyazono K."/>
            <person name="Yanagisawa M."/>
            <person name="Sakurai T."/>
        </authorList>
    </citation>
    <scope>INTERACTION WITH SOSTDC1</scope>
</reference>
<reference key="8">
    <citation type="journal article" date="2008" name="J. Biol. Chem.">
        <title>Targeting of bone morphogenetic protein growth factor complexes to fibrillin.</title>
        <authorList>
            <person name="Sengle G."/>
            <person name="Charbonneau N.L."/>
            <person name="Ono R.N."/>
            <person name="Sasaki T."/>
            <person name="Alvarez J."/>
            <person name="Keene D.R."/>
            <person name="Baechinger H.P."/>
            <person name="Sakai L.Y."/>
        </authorList>
    </citation>
    <scope>INTERACTION WITH FBN1 AND FBN2</scope>
</reference>
<reference key="9">
    <citation type="journal article" date="2008" name="J. Biol. Chem.">
        <title>Bone morphogenetic proteins signal through the transforming growth factor-beta type III receptor.</title>
        <authorList>
            <person name="Kirkbride K.C."/>
            <person name="Townsend T.A."/>
            <person name="Bruinsma M.W."/>
            <person name="Barnett J.V."/>
            <person name="Blobe G.C."/>
        </authorList>
    </citation>
    <scope>INTERACTION WITH TGFBR3</scope>
</reference>
<reference key="10">
    <citation type="journal article" date="2010" name="Hum. Mutat.">
        <title>Bone morphogenetic protein 7 (BMP7) mutations are associated with variable ocular, brain, ear, palate, and skeletal anomalies.</title>
        <authorList>
            <person name="Wyatt A.W."/>
            <person name="Osborne R.J."/>
            <person name="Stewart H."/>
            <person name="Ragge N.K."/>
        </authorList>
    </citation>
    <scope>DEVELOPMENTAL STAGE</scope>
    <scope>VARIANTS PRO-198 AND SER-321</scope>
    <scope>ASSOCIATION WITH DEVELOPMENTAL EYE ANOMALIES</scope>
</reference>
<reference key="11">
    <citation type="journal article" date="2016" name="PLoS Genet.">
        <title>Comparative Transcriptomic and Epigenomic Analyses Reveal New Regulators of Murine Brown Adipogenesis.</title>
        <authorList>
            <person name="Brunmeir R."/>
            <person name="Wu J."/>
            <person name="Peng X."/>
            <person name="Kim S.Y."/>
            <person name="Julien S.G."/>
            <person name="Zhang Q."/>
            <person name="Xie W."/>
            <person name="Xu F."/>
        </authorList>
    </citation>
    <scope>FUNCTION</scope>
</reference>
<reference key="12">
    <citation type="journal article" date="2018" name="Blood">
        <title>Erythroferrone inhibits the induction of hepcidin by BMP6.</title>
        <authorList>
            <person name="Arezes J."/>
            <person name="Foy N."/>
            <person name="McHugh K."/>
            <person name="Sawant A."/>
            <person name="Quinkert D."/>
            <person name="Terraube V."/>
            <person name="Brinth A."/>
            <person name="Tam M."/>
            <person name="LaVallie E.R."/>
            <person name="Taylor S."/>
            <person name="Armitage A.E."/>
            <person name="Pasricha S.R."/>
            <person name="Cunningham O."/>
            <person name="Lambert M."/>
            <person name="Draper S.J."/>
            <person name="Jasuja R."/>
            <person name="Drakesmith H."/>
        </authorList>
    </citation>
    <scope>FUNCTION</scope>
    <scope>INTERACTION WITH MOUSE ERFE</scope>
</reference>
<reference key="13">
    <citation type="journal article" date="2019" name="Biol. Open">
        <title>Chemotropic signaling by BMP7 requires selective interaction at a key residue in ActRIIA.</title>
        <authorList>
            <person name="Perron J.C."/>
            <person name="Rodrigues A.A."/>
            <person name="Surubholta N."/>
            <person name="Dodd J."/>
        </authorList>
    </citation>
    <scope>FUNCTION</scope>
</reference>
<reference key="14">
    <citation type="journal article" date="2021" name="Am. J. Hum. Genet.">
        <title>SCUBE3 loss-of-function causes a recognizable recessive developmental disorder due to defective bone morphogenetic protein signaling.</title>
        <authorList>
            <consortium name="Genomics England Research Consortium"/>
            <person name="Lin Y.C."/>
            <person name="Niceta M."/>
            <person name="Muto V."/>
            <person name="Vona B."/>
            <person name="Pagnamenta A.T."/>
            <person name="Maroofian R."/>
            <person name="Beetz C."/>
            <person name="van Duyvenvoorde H."/>
            <person name="Dentici M.L."/>
            <person name="Lauffer P."/>
            <person name="Vallian S."/>
            <person name="Ciolfi A."/>
            <person name="Pizzi S."/>
            <person name="Bauer P."/>
            <person name="Gruening N.M."/>
            <person name="Bellacchio E."/>
            <person name="Del Fattore A."/>
            <person name="Petrini S."/>
            <person name="Shaheen R."/>
            <person name="Tiosano D."/>
            <person name="Halloun R."/>
            <person name="Pode-Shakked B."/>
            <person name="Albayrak H.M."/>
            <person name="Isik E."/>
            <person name="Wit J.M."/>
            <person name="Dittrich M."/>
            <person name="Freire B.L."/>
            <person name="Bertola D.R."/>
            <person name="Jorge A.A.L."/>
            <person name="Barel O."/>
            <person name="Sabir A.H."/>
            <person name="Al Tenaiji A.M.J."/>
            <person name="Taji S.M."/>
            <person name="Al-Sannaa N."/>
            <person name="Al-Abdulwahed H."/>
            <person name="Digilio M.C."/>
            <person name="Irving M."/>
            <person name="Anikster Y."/>
            <person name="Bhavani G.S.L."/>
            <person name="Girisha K.M."/>
            <person name="Haaf T."/>
            <person name="Taylor J.C."/>
            <person name="Dallapiccola B."/>
            <person name="Alkuraya F.S."/>
            <person name="Yang R.B."/>
            <person name="Tartaglia M."/>
        </authorList>
    </citation>
    <scope>INTERACTION WITH SCUBE3</scope>
</reference>
<reference key="15">
    <citation type="journal article" date="1996" name="Proc. Natl. Acad. Sci. U.S.A.">
        <title>Three-dimensional structure of recombinant human osteogenic protein 1: structural paradigm for the transforming growth factor beta superfamily.</title>
        <authorList>
            <person name="Griffith D.L."/>
            <person name="Keck P.C."/>
            <person name="Sampath T.K."/>
            <person name="Rueger D.C."/>
            <person name="Carlson W.D."/>
        </authorList>
    </citation>
    <scope>X-RAY CRYSTALLOGRAPHY (2.8 ANGSTROMS) OF 293-431</scope>
    <scope>SUBUNIT</scope>
</reference>
<reference evidence="18" key="16">
    <citation type="journal article" date="2002" name="Nature">
        <title>Structural basis of BMP signalling inhibition by the cystine knot protein Noggin.</title>
        <authorList>
            <person name="Groppe J."/>
            <person name="Greenwald J."/>
            <person name="Wiater E."/>
            <person name="Rodriguez-Leon J."/>
            <person name="Economides A.N."/>
            <person name="Kwiatkowski W."/>
            <person name="Affolter M."/>
            <person name="Vale W.W."/>
            <person name="Izpisua Belmonte J.C."/>
            <person name="Choe S."/>
        </authorList>
    </citation>
    <scope>X-RAY CRYSTALLOGRAPHY (2.42 ANGSTROMS) OF 293-431</scope>
    <scope>GLYCOSYLATION AT ASN-372</scope>
    <scope>INTERACTION WITH NOG</scope>
    <scope>FUNCTION</scope>
</reference>
<reference evidence="16 17" key="17">
    <citation type="journal article" date="2003" name="Mol. Cell">
        <title>The BMP7/ActRII extracellular domain complex provides new insights into the cooperative nature of receptor assembly.</title>
        <authorList>
            <person name="Greenwald J."/>
            <person name="Groppe J."/>
            <person name="Gray P."/>
            <person name="Wiater E."/>
            <person name="Kwiatkowski W."/>
            <person name="Vale W."/>
            <person name="Choe S."/>
        </authorList>
    </citation>
    <scope>X-RAY CRYSTALLOGRAPHY (2.00 ANGSTROMS) OF 293-431</scope>
    <scope>GLYCOSYLATION AT ASN-372</scope>
    <scope>INTERACTION WITH ACVR2A</scope>
    <scope>FUNCTION</scope>
</reference>
<evidence type="ECO:0000250" key="1">
    <source>
        <dbReference type="UniProtKB" id="P23359"/>
    </source>
</evidence>
<evidence type="ECO:0000255" key="2"/>
<evidence type="ECO:0000256" key="3">
    <source>
        <dbReference type="SAM" id="MobiDB-lite"/>
    </source>
</evidence>
<evidence type="ECO:0000269" key="4">
    <source>
    </source>
</evidence>
<evidence type="ECO:0000269" key="5">
    <source>
    </source>
</evidence>
<evidence type="ECO:0000269" key="6">
    <source>
    </source>
</evidence>
<evidence type="ECO:0000269" key="7">
    <source>
    </source>
</evidence>
<evidence type="ECO:0000269" key="8">
    <source>
    </source>
</evidence>
<evidence type="ECO:0000269" key="9">
    <source>
    </source>
</evidence>
<evidence type="ECO:0000269" key="10">
    <source>
    </source>
</evidence>
<evidence type="ECO:0000269" key="11">
    <source>
    </source>
</evidence>
<evidence type="ECO:0000269" key="12">
    <source>
    </source>
</evidence>
<evidence type="ECO:0000269" key="13">
    <source>
    </source>
</evidence>
<evidence type="ECO:0000269" key="14">
    <source>
    </source>
</evidence>
<evidence type="ECO:0000305" key="15"/>
<evidence type="ECO:0007744" key="16">
    <source>
        <dbReference type="PDB" id="1LX5"/>
    </source>
</evidence>
<evidence type="ECO:0007744" key="17">
    <source>
        <dbReference type="PDB" id="1LXI"/>
    </source>
</evidence>
<evidence type="ECO:0007744" key="18">
    <source>
        <dbReference type="PDB" id="1M4U"/>
    </source>
</evidence>
<evidence type="ECO:0007829" key="19">
    <source>
        <dbReference type="PDB" id="1BMP"/>
    </source>
</evidence>
<evidence type="ECO:0007829" key="20">
    <source>
        <dbReference type="PDB" id="1LXI"/>
    </source>
</evidence>
<evidence type="ECO:0007829" key="21">
    <source>
        <dbReference type="PDB" id="1M4U"/>
    </source>
</evidence>
<comment type="function">
    <text evidence="4 5 9 10 11 14">Growth factor of the TGF-beta superfamily that plays important role in various biological processes, including embryogenesis, hematopoiesis, neurogenesis and skeletal morphogenesis (PubMed:31208997). Initiates the canonical BMP signaling cascade by associating with type I receptor ACVR1 and type II receptor ACVR2A (PubMed:12667445, PubMed:9748228). Once all three components are bound together in a complex at the cell surface, ACVR2A phosphorylates and activates ACVR1. In turn, ACVR1 propagates signal by phosphorylating SMAD1/5/8 that travel to the nucleus and act as activators and repressors of transcription of target genes (PubMed:12478285). For specific functions such as growth cone collapse in developing spinal neurons and chemotaxis of monocytes, also uses BMPR2 as type II receptor (PubMed:31208997). Can also signal through non-canonical pathways such as P38 MAP kinase signaling cascade that promotes brown adipocyte differentiation through activation of target genes, including members of the SOX family of transcription factors (PubMed:27923061). Promotes the expression of HAMP, this is repressed by its interaction with ERFE (PubMed:30097509).</text>
</comment>
<comment type="subunit">
    <text evidence="1 4 5 7 10 12 13 14">Homodimer; disulfide-linked (PubMed:8570652). Interacts with SOSTDC1 (PubMed:15020244). Interacts with TWSG1 (By similarity). Interacts with FBN1 (via N-terminal domain) and FBN2 (PubMed:18339631). Interacts with type I receptor ACVR1 (PubMed:9748228). Interacts with type II receptor ACVR2A (PubMed:12667445). Interacts with NOG; this interaction inhibits canonical BMP signaling (PubMed:12478285). Interacts with SCUBE3 (PubMed:33308444). Interacts with ERFE; the interaction inhibits BMP-induced transcription of HAMP (PubMed:30097509). Interacts with TGFBR3 (By similarity).</text>
</comment>
<comment type="interaction">
    <interactant intactId="EBI-1035195">
        <id>P18075</id>
    </interactant>
    <interactant intactId="EBI-742722">
        <id>Q9BUH8</id>
        <label>BEGAIN</label>
    </interactant>
    <organismsDiffer>false</organismsDiffer>
    <experiments>3</experiments>
</comment>
<comment type="interaction">
    <interactant intactId="EBI-1035195">
        <id>P18075</id>
    </interactant>
    <interactant intactId="EBI-11977221">
        <id>Q86Z20</id>
        <label>CCDC125</label>
    </interactant>
    <organismsDiffer>false</organismsDiffer>
    <experiments>3</experiments>
</comment>
<comment type="interaction">
    <interactant intactId="EBI-1035195">
        <id>P18075</id>
    </interactant>
    <interactant intactId="EBI-3867333">
        <id>A8MQ03</id>
        <label>CYSRT1</label>
    </interactant>
    <organismsDiffer>false</organismsDiffer>
    <experiments>3</experiments>
</comment>
<comment type="interaction">
    <interactant intactId="EBI-1035195">
        <id>P18075</id>
    </interactant>
    <interactant intactId="EBI-742808">
        <id>Q5VWX1</id>
        <label>KHDRBS2</label>
    </interactant>
    <organismsDiffer>false</organismsDiffer>
    <experiments>3</experiments>
</comment>
<comment type="interaction">
    <interactant intactId="EBI-1035195">
        <id>P18075</id>
    </interactant>
    <interactant intactId="EBI-11749135">
        <id>Q8IUG1</id>
        <label>KRTAP1-3</label>
    </interactant>
    <organismsDiffer>false</organismsDiffer>
    <experiments>3</experiments>
</comment>
<comment type="interaction">
    <interactant intactId="EBI-1035195">
        <id>P18075</id>
    </interactant>
    <interactant intactId="EBI-10171774">
        <id>P60410</id>
        <label>KRTAP10-8</label>
    </interactant>
    <organismsDiffer>false</organismsDiffer>
    <experiments>3</experiments>
</comment>
<comment type="interaction">
    <interactant intactId="EBI-1035195">
        <id>P18075</id>
    </interactant>
    <interactant intactId="EBI-10172052">
        <id>P60411</id>
        <label>KRTAP10-9</label>
    </interactant>
    <organismsDiffer>false</organismsDiffer>
    <experiments>3</experiments>
</comment>
<comment type="interaction">
    <interactant intactId="EBI-1035195">
        <id>P18075</id>
    </interactant>
    <interactant intactId="EBI-11953334">
        <id>P60328</id>
        <label>KRTAP12-3</label>
    </interactant>
    <organismsDiffer>false</organismsDiffer>
    <experiments>3</experiments>
</comment>
<comment type="interaction">
    <interactant intactId="EBI-1035195">
        <id>P18075</id>
    </interactant>
    <interactant intactId="EBI-9996449">
        <id>Q9BYR8</id>
        <label>KRTAP3-1</label>
    </interactant>
    <organismsDiffer>false</organismsDiffer>
    <experiments>3</experiments>
</comment>
<comment type="interaction">
    <interactant intactId="EBI-1035195">
        <id>P18075</id>
    </interactant>
    <interactant intactId="EBI-3958099">
        <id>P26371</id>
        <label>KRTAP5-9</label>
    </interactant>
    <organismsDiffer>false</organismsDiffer>
    <experiments>3</experiments>
</comment>
<comment type="interaction">
    <interactant intactId="EBI-1035195">
        <id>P18075</id>
    </interactant>
    <interactant intactId="EBI-11958364">
        <id>Q9BYQ0</id>
        <label>KRTAP9-8</label>
    </interactant>
    <organismsDiffer>false</organismsDiffer>
    <experiments>3</experiments>
</comment>
<comment type="interaction">
    <interactant intactId="EBI-1035195">
        <id>P18075</id>
    </interactant>
    <interactant intactId="EBI-22310682">
        <id>P0DPK4</id>
        <label>NOTCH2NLC</label>
    </interactant>
    <organismsDiffer>false</organismsDiffer>
    <experiments>3</experiments>
</comment>
<comment type="interaction">
    <interactant intactId="EBI-1035195">
        <id>P18075</id>
    </interactant>
    <interactant intactId="EBI-719493">
        <id>P14373</id>
        <label>TRIM27</label>
    </interactant>
    <organismsDiffer>false</organismsDiffer>
    <experiments>4</experiments>
</comment>
<comment type="subcellular location">
    <subcellularLocation>
        <location>Secreted</location>
    </subcellularLocation>
</comment>
<comment type="tissue specificity">
    <text>Expressed in the kidney and bladder. Lower levels seen in the brain.</text>
</comment>
<comment type="developmental stage">
    <text evidence="8">Expressed in the developing eye, brain and ear during embryogenesis.</text>
</comment>
<comment type="PTM">
    <text evidence="6">Several N-termini starting at positions 293, 300, 315 and 316 have been identified by direct sequencing resulting in secretion of different mature forms.</text>
</comment>
<comment type="pharmaceutical">
    <text>Available under the name Osigraft (Stryker). Its use is indicated in the treatment of tibial non-union of at least 9 months duration, secondary to trauma, in skeletally mature patients, in cases where autograft has failed or is unfeasible.</text>
</comment>
<comment type="similarity">
    <text evidence="15">Belongs to the TGF-beta family.</text>
</comment>
<comment type="online information" name="Wikipedia">
    <link uri="https://en.wikipedia.org/wiki/Bone_morphogenetic_protein_7"/>
    <text>Bone morphogenetic protein 7 entry</text>
</comment>
<gene>
    <name type="primary">BMP7</name>
    <name type="synonym">OP1</name>
</gene>
<proteinExistence type="evidence at protein level"/>
<dbReference type="EMBL" id="X51801">
    <property type="protein sequence ID" value="CAA36100.1"/>
    <property type="molecule type" value="mRNA"/>
</dbReference>
<dbReference type="EMBL" id="M60316">
    <property type="protein sequence ID" value="AAA36738.1"/>
    <property type="molecule type" value="mRNA"/>
</dbReference>
<dbReference type="EMBL" id="AL122058">
    <property type="status" value="NOT_ANNOTATED_CDS"/>
    <property type="molecule type" value="Genomic_DNA"/>
</dbReference>
<dbReference type="EMBL" id="AL157414">
    <property type="status" value="NOT_ANNOTATED_CDS"/>
    <property type="molecule type" value="Genomic_DNA"/>
</dbReference>
<dbReference type="EMBL" id="BC008584">
    <property type="protein sequence ID" value="AAH08584.1"/>
    <property type="molecule type" value="mRNA"/>
</dbReference>
<dbReference type="CCDS" id="CCDS13455.1"/>
<dbReference type="PIR" id="C39263">
    <property type="entry name" value="BMHU7"/>
</dbReference>
<dbReference type="RefSeq" id="NP_001710.1">
    <property type="nucleotide sequence ID" value="NM_001719.3"/>
</dbReference>
<dbReference type="PDB" id="1BMP">
    <property type="method" value="X-ray"/>
    <property type="resolution" value="2.80 A"/>
    <property type="chains" value="A=293-431"/>
</dbReference>
<dbReference type="PDB" id="1LX5">
    <property type="method" value="X-ray"/>
    <property type="resolution" value="3.30 A"/>
    <property type="chains" value="A=293-431"/>
</dbReference>
<dbReference type="PDB" id="1LXI">
    <property type="method" value="X-ray"/>
    <property type="resolution" value="2.00 A"/>
    <property type="chains" value="A=293-431"/>
</dbReference>
<dbReference type="PDB" id="1M4U">
    <property type="method" value="X-ray"/>
    <property type="resolution" value="2.42 A"/>
    <property type="chains" value="L=293-431"/>
</dbReference>
<dbReference type="PDBsum" id="1BMP"/>
<dbReference type="PDBsum" id="1LX5"/>
<dbReference type="PDBsum" id="1LXI"/>
<dbReference type="PDBsum" id="1M4U"/>
<dbReference type="SMR" id="P18075"/>
<dbReference type="BioGRID" id="107123">
    <property type="interactions" value="81"/>
</dbReference>
<dbReference type="DIP" id="DIP-5800N"/>
<dbReference type="FunCoup" id="P18075">
    <property type="interactions" value="670"/>
</dbReference>
<dbReference type="IntAct" id="P18075">
    <property type="interactions" value="50"/>
</dbReference>
<dbReference type="MINT" id="P18075"/>
<dbReference type="STRING" id="9606.ENSP00000379204"/>
<dbReference type="GlyCosmos" id="P18075">
    <property type="glycosylation" value="4 sites, No reported glycans"/>
</dbReference>
<dbReference type="GlyGen" id="P18075">
    <property type="glycosylation" value="5 sites, 3 N-linked glycans (2 sites), 1 O-linked glycan (1 site)"/>
</dbReference>
<dbReference type="iPTMnet" id="P18075"/>
<dbReference type="PhosphoSitePlus" id="P18075"/>
<dbReference type="BioMuta" id="BMP7"/>
<dbReference type="DMDM" id="115078"/>
<dbReference type="jPOST" id="P18075"/>
<dbReference type="MassIVE" id="P18075"/>
<dbReference type="PaxDb" id="9606-ENSP00000379204"/>
<dbReference type="PeptideAtlas" id="P18075"/>
<dbReference type="ProteomicsDB" id="53544"/>
<dbReference type="Antibodypedia" id="14123">
    <property type="antibodies" value="928 antibodies from 45 providers"/>
</dbReference>
<dbReference type="DNASU" id="655"/>
<dbReference type="Ensembl" id="ENST00000395863.8">
    <property type="protein sequence ID" value="ENSP00000379204.3"/>
    <property type="gene ID" value="ENSG00000101144.13"/>
</dbReference>
<dbReference type="GeneID" id="655"/>
<dbReference type="KEGG" id="hsa:655"/>
<dbReference type="MANE-Select" id="ENST00000395863.8">
    <property type="protein sequence ID" value="ENSP00000379204.3"/>
    <property type="RefSeq nucleotide sequence ID" value="NM_001719.3"/>
    <property type="RefSeq protein sequence ID" value="NP_001710.1"/>
</dbReference>
<dbReference type="UCSC" id="uc010gip.2">
    <property type="organism name" value="human"/>
</dbReference>
<dbReference type="AGR" id="HGNC:1074"/>
<dbReference type="CTD" id="655"/>
<dbReference type="DisGeNET" id="655"/>
<dbReference type="GeneCards" id="BMP7"/>
<dbReference type="HGNC" id="HGNC:1074">
    <property type="gene designation" value="BMP7"/>
</dbReference>
<dbReference type="HPA" id="ENSG00000101144">
    <property type="expression patterns" value="Tissue enhanced (choroid plexus, thyroid gland)"/>
</dbReference>
<dbReference type="MalaCards" id="BMP7"/>
<dbReference type="MIM" id="112267">
    <property type="type" value="gene"/>
</dbReference>
<dbReference type="neXtProt" id="NX_P18075"/>
<dbReference type="OpenTargets" id="ENSG00000101144"/>
<dbReference type="PharmGKB" id="PA25384"/>
<dbReference type="VEuPathDB" id="HostDB:ENSG00000101144"/>
<dbReference type="eggNOG" id="KOG3900">
    <property type="taxonomic scope" value="Eukaryota"/>
</dbReference>
<dbReference type="GeneTree" id="ENSGT00940000156490"/>
<dbReference type="InParanoid" id="P18075"/>
<dbReference type="OMA" id="WLTANKQ"/>
<dbReference type="OrthoDB" id="5987191at2759"/>
<dbReference type="PAN-GO" id="P18075">
    <property type="GO annotations" value="6 GO annotations based on evolutionary models"/>
</dbReference>
<dbReference type="PhylomeDB" id="P18075"/>
<dbReference type="TreeFam" id="TF316134"/>
<dbReference type="PathwayCommons" id="P18075"/>
<dbReference type="Reactome" id="R-HSA-2129379">
    <property type="pathway name" value="Molecules associated with elastic fibres"/>
</dbReference>
<dbReference type="Reactome" id="R-HSA-9844594">
    <property type="pathway name" value="Transcriptional regulation of brown and beige adipocyte differentiation by EBF2"/>
</dbReference>
<dbReference type="SignaLink" id="P18075"/>
<dbReference type="SIGNOR" id="P18075"/>
<dbReference type="BioGRID-ORCS" id="655">
    <property type="hits" value="11 hits in 1153 CRISPR screens"/>
</dbReference>
<dbReference type="ChiTaRS" id="BMP7">
    <property type="organism name" value="human"/>
</dbReference>
<dbReference type="EvolutionaryTrace" id="P18075"/>
<dbReference type="GeneWiki" id="Bone_morphogenetic_protein_7"/>
<dbReference type="GenomeRNAi" id="655"/>
<dbReference type="Pharos" id="P18075">
    <property type="development level" value="Tbio"/>
</dbReference>
<dbReference type="PRO" id="PR:P18075"/>
<dbReference type="Proteomes" id="UP000005640">
    <property type="component" value="Chromosome 20"/>
</dbReference>
<dbReference type="RNAct" id="P18075">
    <property type="molecule type" value="protein"/>
</dbReference>
<dbReference type="Bgee" id="ENSG00000101144">
    <property type="expression patterns" value="Expressed in pigmented layer of retina and 175 other cell types or tissues"/>
</dbReference>
<dbReference type="ExpressionAtlas" id="P18075">
    <property type="expression patterns" value="baseline and differential"/>
</dbReference>
<dbReference type="GO" id="GO:0005576">
    <property type="term" value="C:extracellular region"/>
    <property type="evidence" value="ECO:0000304"/>
    <property type="project" value="Reactome"/>
</dbReference>
<dbReference type="GO" id="GO:0005615">
    <property type="term" value="C:extracellular space"/>
    <property type="evidence" value="ECO:0000314"/>
    <property type="project" value="UniProtKB"/>
</dbReference>
<dbReference type="GO" id="GO:0031982">
    <property type="term" value="C:vesicle"/>
    <property type="evidence" value="ECO:0007669"/>
    <property type="project" value="Ensembl"/>
</dbReference>
<dbReference type="GO" id="GO:0070700">
    <property type="term" value="F:BMP receptor binding"/>
    <property type="evidence" value="ECO:0000353"/>
    <property type="project" value="BHF-UCL"/>
</dbReference>
<dbReference type="GO" id="GO:0005125">
    <property type="term" value="F:cytokine activity"/>
    <property type="evidence" value="ECO:0000318"/>
    <property type="project" value="GO_Central"/>
</dbReference>
<dbReference type="GO" id="GO:0008083">
    <property type="term" value="F:growth factor activity"/>
    <property type="evidence" value="ECO:0000314"/>
    <property type="project" value="UniProt"/>
</dbReference>
<dbReference type="GO" id="GO:0008201">
    <property type="term" value="F:heparin binding"/>
    <property type="evidence" value="ECO:0007669"/>
    <property type="project" value="Ensembl"/>
</dbReference>
<dbReference type="GO" id="GO:0043539">
    <property type="term" value="F:protein serine/threonine kinase activator activity"/>
    <property type="evidence" value="ECO:0000314"/>
    <property type="project" value="UniProt"/>
</dbReference>
<dbReference type="GO" id="GO:1905069">
    <property type="term" value="P:allantois development"/>
    <property type="evidence" value="ECO:0000250"/>
    <property type="project" value="BHF-UCL"/>
</dbReference>
<dbReference type="GO" id="GO:0036305">
    <property type="term" value="P:ameloblast differentiation"/>
    <property type="evidence" value="ECO:0007669"/>
    <property type="project" value="Ensembl"/>
</dbReference>
<dbReference type="GO" id="GO:0007411">
    <property type="term" value="P:axon guidance"/>
    <property type="evidence" value="ECO:0007669"/>
    <property type="project" value="Ensembl"/>
</dbReference>
<dbReference type="GO" id="GO:0030509">
    <property type="term" value="P:BMP signaling pathway"/>
    <property type="evidence" value="ECO:0000314"/>
    <property type="project" value="UniProtKB"/>
</dbReference>
<dbReference type="GO" id="GO:0060445">
    <property type="term" value="P:branching involved in salivary gland morphogenesis"/>
    <property type="evidence" value="ECO:0007669"/>
    <property type="project" value="Ensembl"/>
</dbReference>
<dbReference type="GO" id="GO:0048754">
    <property type="term" value="P:branching morphogenesis of an epithelial tube"/>
    <property type="evidence" value="ECO:0007669"/>
    <property type="project" value="Ensembl"/>
</dbReference>
<dbReference type="GO" id="GO:0048738">
    <property type="term" value="P:cardiac muscle tissue development"/>
    <property type="evidence" value="ECO:0000250"/>
    <property type="project" value="BHF-UCL"/>
</dbReference>
<dbReference type="GO" id="GO:0060411">
    <property type="term" value="P:cardiac septum morphogenesis"/>
    <property type="evidence" value="ECO:0000250"/>
    <property type="project" value="BHF-UCL"/>
</dbReference>
<dbReference type="GO" id="GO:0051216">
    <property type="term" value="P:cartilage development"/>
    <property type="evidence" value="ECO:0007669"/>
    <property type="project" value="UniProtKB-KW"/>
</dbReference>
<dbReference type="GO" id="GO:0071773">
    <property type="term" value="P:cellular response to BMP stimulus"/>
    <property type="evidence" value="ECO:0000315"/>
    <property type="project" value="BHF-UCL"/>
</dbReference>
<dbReference type="GO" id="GO:0071456">
    <property type="term" value="P:cellular response to hypoxia"/>
    <property type="evidence" value="ECO:0000250"/>
    <property type="project" value="BHF-UCL"/>
</dbReference>
<dbReference type="GO" id="GO:0060710">
    <property type="term" value="P:chorio-allantoic fusion"/>
    <property type="evidence" value="ECO:0000250"/>
    <property type="project" value="BHF-UCL"/>
</dbReference>
<dbReference type="GO" id="GO:0016358">
    <property type="term" value="P:dendrite development"/>
    <property type="evidence" value="ECO:0000304"/>
    <property type="project" value="BHF-UCL"/>
</dbReference>
<dbReference type="GO" id="GO:0048596">
    <property type="term" value="P:embryonic camera-type eye morphogenesis"/>
    <property type="evidence" value="ECO:0007669"/>
    <property type="project" value="Ensembl"/>
</dbReference>
<dbReference type="GO" id="GO:0030326">
    <property type="term" value="P:embryonic limb morphogenesis"/>
    <property type="evidence" value="ECO:0007669"/>
    <property type="project" value="Ensembl"/>
</dbReference>
<dbReference type="GO" id="GO:0009880">
    <property type="term" value="P:embryonic pattern specification"/>
    <property type="evidence" value="ECO:0007669"/>
    <property type="project" value="Ensembl"/>
</dbReference>
<dbReference type="GO" id="GO:0060272">
    <property type="term" value="P:embryonic skeletal joint morphogenesis"/>
    <property type="evidence" value="ECO:0007669"/>
    <property type="project" value="Ensembl"/>
</dbReference>
<dbReference type="GO" id="GO:0003272">
    <property type="term" value="P:endocardial cushion formation"/>
    <property type="evidence" value="ECO:0000250"/>
    <property type="project" value="BHF-UCL"/>
</dbReference>
<dbReference type="GO" id="GO:0001837">
    <property type="term" value="P:epithelial to mesenchymal transition"/>
    <property type="evidence" value="ECO:0000304"/>
    <property type="project" value="HGNC-UCL"/>
</dbReference>
<dbReference type="GO" id="GO:0061384">
    <property type="term" value="P:heart trabecula morphogenesis"/>
    <property type="evidence" value="ECO:0000250"/>
    <property type="project" value="BHF-UCL"/>
</dbReference>
<dbReference type="GO" id="GO:0030902">
    <property type="term" value="P:hindbrain development"/>
    <property type="evidence" value="ECO:0000250"/>
    <property type="project" value="BHF-UCL"/>
</dbReference>
<dbReference type="GO" id="GO:1901145">
    <property type="term" value="P:mesenchymal cell apoptotic process involved in nephron morphogenesis"/>
    <property type="evidence" value="ECO:0007669"/>
    <property type="project" value="Ensembl"/>
</dbReference>
<dbReference type="GO" id="GO:0048762">
    <property type="term" value="P:mesenchymal cell differentiation"/>
    <property type="evidence" value="ECO:0000314"/>
    <property type="project" value="UniProtKB"/>
</dbReference>
<dbReference type="GO" id="GO:0060485">
    <property type="term" value="P:mesenchyme development"/>
    <property type="evidence" value="ECO:0000250"/>
    <property type="project" value="UniProtKB"/>
</dbReference>
<dbReference type="GO" id="GO:0001707">
    <property type="term" value="P:mesoderm formation"/>
    <property type="evidence" value="ECO:0007669"/>
    <property type="project" value="Ensembl"/>
</dbReference>
<dbReference type="GO" id="GO:0001823">
    <property type="term" value="P:mesonephros development"/>
    <property type="evidence" value="ECO:0000270"/>
    <property type="project" value="UniProtKB"/>
</dbReference>
<dbReference type="GO" id="GO:0072136">
    <property type="term" value="P:metanephric mesenchymal cell proliferation involved in metanephros development"/>
    <property type="evidence" value="ECO:0007669"/>
    <property type="project" value="Ensembl"/>
</dbReference>
<dbReference type="GO" id="GO:0072133">
    <property type="term" value="P:metanephric mesenchyme morphogenesis"/>
    <property type="evidence" value="ECO:0007669"/>
    <property type="project" value="Ensembl"/>
</dbReference>
<dbReference type="GO" id="GO:0001656">
    <property type="term" value="P:metanephros development"/>
    <property type="evidence" value="ECO:0000270"/>
    <property type="project" value="UniProtKB"/>
</dbReference>
<dbReference type="GO" id="GO:0070487">
    <property type="term" value="P:monocyte aggregation"/>
    <property type="evidence" value="ECO:0000314"/>
    <property type="project" value="UniProtKB"/>
</dbReference>
<dbReference type="GO" id="GO:0045786">
    <property type="term" value="P:negative regulation of cell cycle"/>
    <property type="evidence" value="ECO:0000314"/>
    <property type="project" value="HGNC-UCL"/>
</dbReference>
<dbReference type="GO" id="GO:0045892">
    <property type="term" value="P:negative regulation of DNA-templated transcription"/>
    <property type="evidence" value="ECO:0000314"/>
    <property type="project" value="UniProtKB"/>
</dbReference>
<dbReference type="GO" id="GO:0072125">
    <property type="term" value="P:negative regulation of glomerular mesangial cell proliferation"/>
    <property type="evidence" value="ECO:0000314"/>
    <property type="project" value="UniProtKB"/>
</dbReference>
<dbReference type="GO" id="GO:0072040">
    <property type="term" value="P:negative regulation of mesenchymal cell apoptotic process involved in nephron morphogenesis"/>
    <property type="evidence" value="ECO:0007669"/>
    <property type="project" value="Ensembl"/>
</dbReference>
<dbReference type="GO" id="GO:0045839">
    <property type="term" value="P:negative regulation of mitotic nuclear division"/>
    <property type="evidence" value="ECO:0000314"/>
    <property type="project" value="UniProtKB"/>
</dbReference>
<dbReference type="GO" id="GO:0050768">
    <property type="term" value="P:negative regulation of neurogenesis"/>
    <property type="evidence" value="ECO:0007669"/>
    <property type="project" value="Ensembl"/>
</dbReference>
<dbReference type="GO" id="GO:0045665">
    <property type="term" value="P:negative regulation of neuron differentiation"/>
    <property type="evidence" value="ECO:0000314"/>
    <property type="project" value="MGI"/>
</dbReference>
<dbReference type="GO" id="GO:1901223">
    <property type="term" value="P:negative regulation of non-canonical NF-kappaB signal transduction"/>
    <property type="evidence" value="ECO:0000250"/>
    <property type="project" value="BHF-UCL"/>
</dbReference>
<dbReference type="GO" id="GO:0045746">
    <property type="term" value="P:negative regulation of Notch signaling pathway"/>
    <property type="evidence" value="ECO:0007669"/>
    <property type="project" value="Ensembl"/>
</dbReference>
<dbReference type="GO" id="GO:0060686">
    <property type="term" value="P:negative regulation of prostatic bud formation"/>
    <property type="evidence" value="ECO:0007669"/>
    <property type="project" value="Ensembl"/>
</dbReference>
<dbReference type="GO" id="GO:0010664">
    <property type="term" value="P:negative regulation of striated muscle cell apoptotic process"/>
    <property type="evidence" value="ECO:0000250"/>
    <property type="project" value="BHF-UCL"/>
</dbReference>
<dbReference type="GO" id="GO:0072134">
    <property type="term" value="P:nephrogenic mesenchyme morphogenesis"/>
    <property type="evidence" value="ECO:0007669"/>
    <property type="project" value="Ensembl"/>
</dbReference>
<dbReference type="GO" id="GO:0021502">
    <property type="term" value="P:neural fold elevation formation"/>
    <property type="evidence" value="ECO:0000250"/>
    <property type="project" value="BHF-UCL"/>
</dbReference>
<dbReference type="GO" id="GO:0048812">
    <property type="term" value="P:neuron projection morphogenesis"/>
    <property type="evidence" value="ECO:0000314"/>
    <property type="project" value="MGI"/>
</dbReference>
<dbReference type="GO" id="GO:0042475">
    <property type="term" value="P:odontogenesis of dentin-containing tooth"/>
    <property type="evidence" value="ECO:0007669"/>
    <property type="project" value="Ensembl"/>
</dbReference>
<dbReference type="GO" id="GO:0001649">
    <property type="term" value="P:osteoblast differentiation"/>
    <property type="evidence" value="ECO:0000314"/>
    <property type="project" value="UniProt"/>
</dbReference>
<dbReference type="GO" id="GO:0003344">
    <property type="term" value="P:pericardium morphogenesis"/>
    <property type="evidence" value="ECO:0000250"/>
    <property type="project" value="BHF-UCL"/>
</dbReference>
<dbReference type="GO" id="GO:0060037">
    <property type="term" value="P:pharyngeal system development"/>
    <property type="evidence" value="ECO:0000250"/>
    <property type="project" value="BHF-UCL"/>
</dbReference>
<dbReference type="GO" id="GO:0043065">
    <property type="term" value="P:positive regulation of apoptotic process"/>
    <property type="evidence" value="ECO:0007669"/>
    <property type="project" value="Ensembl"/>
</dbReference>
<dbReference type="GO" id="GO:0030501">
    <property type="term" value="P:positive regulation of bone mineralization"/>
    <property type="evidence" value="ECO:0000314"/>
    <property type="project" value="BHF-UCL"/>
</dbReference>
<dbReference type="GO" id="GO:0090336">
    <property type="term" value="P:positive regulation of brown fat cell differentiation"/>
    <property type="evidence" value="ECO:0000315"/>
    <property type="project" value="UniProtKB"/>
</dbReference>
<dbReference type="GO" id="GO:1905312">
    <property type="term" value="P:positive regulation of cardiac neural crest cell migration involved in outflow tract morphogenesis"/>
    <property type="evidence" value="ECO:0007669"/>
    <property type="project" value="Ensembl"/>
</dbReference>
<dbReference type="GO" id="GO:1900006">
    <property type="term" value="P:positive regulation of dendrite development"/>
    <property type="evidence" value="ECO:0000314"/>
    <property type="project" value="BHF-UCL"/>
</dbReference>
<dbReference type="GO" id="GO:0045893">
    <property type="term" value="P:positive regulation of DNA-templated transcription"/>
    <property type="evidence" value="ECO:0000314"/>
    <property type="project" value="UniProtKB"/>
</dbReference>
<dbReference type="GO" id="GO:0030858">
    <property type="term" value="P:positive regulation of epithelial cell differentiation"/>
    <property type="evidence" value="ECO:0007669"/>
    <property type="project" value="Ensembl"/>
</dbReference>
<dbReference type="GO" id="GO:0010718">
    <property type="term" value="P:positive regulation of epithelial to mesenchymal transition"/>
    <property type="evidence" value="ECO:0007669"/>
    <property type="project" value="Ensembl"/>
</dbReference>
<dbReference type="GO" id="GO:0010628">
    <property type="term" value="P:positive regulation of gene expression"/>
    <property type="evidence" value="ECO:0000314"/>
    <property type="project" value="BHF-UCL"/>
</dbReference>
<dbReference type="GO" id="GO:0034116">
    <property type="term" value="P:positive regulation of heterotypic cell-cell adhesion"/>
    <property type="evidence" value="ECO:0000314"/>
    <property type="project" value="UniProtKB"/>
</dbReference>
<dbReference type="GO" id="GO:1900106">
    <property type="term" value="P:positive regulation of hyaluranon cable assembly"/>
    <property type="evidence" value="ECO:0000314"/>
    <property type="project" value="UniProtKB"/>
</dbReference>
<dbReference type="GO" id="GO:0045666">
    <property type="term" value="P:positive regulation of neuron differentiation"/>
    <property type="evidence" value="ECO:0007669"/>
    <property type="project" value="Ensembl"/>
</dbReference>
<dbReference type="GO" id="GO:0045669">
    <property type="term" value="P:positive regulation of osteoblast differentiation"/>
    <property type="evidence" value="ECO:0000314"/>
    <property type="project" value="BHF-UCL"/>
</dbReference>
<dbReference type="GO" id="GO:0060391">
    <property type="term" value="P:positive regulation of SMAD protein signal transduction"/>
    <property type="evidence" value="ECO:0000314"/>
    <property type="project" value="UniProtKB"/>
</dbReference>
<dbReference type="GO" id="GO:0045944">
    <property type="term" value="P:positive regulation of transcription by RNA polymerase II"/>
    <property type="evidence" value="ECO:0007669"/>
    <property type="project" value="Ensembl"/>
</dbReference>
<dbReference type="GO" id="GO:0060687">
    <property type="term" value="P:regulation of branching involved in prostate gland morphogenesis"/>
    <property type="evidence" value="ECO:0007669"/>
    <property type="project" value="Ensembl"/>
</dbReference>
<dbReference type="GO" id="GO:2000121">
    <property type="term" value="P:regulation of removal of superoxide radicals"/>
    <property type="evidence" value="ECO:0000250"/>
    <property type="project" value="BHF-UCL"/>
</dbReference>
<dbReference type="GO" id="GO:0032355">
    <property type="term" value="P:response to estradiol"/>
    <property type="evidence" value="ECO:0007669"/>
    <property type="project" value="Ensembl"/>
</dbReference>
<dbReference type="GO" id="GO:0043434">
    <property type="term" value="P:response to peptide hormone"/>
    <property type="evidence" value="ECO:0007669"/>
    <property type="project" value="Ensembl"/>
</dbReference>
<dbReference type="GO" id="GO:0033280">
    <property type="term" value="P:response to vitamin D"/>
    <property type="evidence" value="ECO:0007669"/>
    <property type="project" value="Ensembl"/>
</dbReference>
<dbReference type="GO" id="GO:0001501">
    <property type="term" value="P:skeletal system development"/>
    <property type="evidence" value="ECO:0000304"/>
    <property type="project" value="ProtInc"/>
</dbReference>
<dbReference type="GO" id="GO:0001657">
    <property type="term" value="P:ureteric bud development"/>
    <property type="evidence" value="ECO:0000250"/>
    <property type="project" value="UniProtKB"/>
</dbReference>
<dbReference type="CDD" id="cd19397">
    <property type="entry name" value="TGF_beta_BMP7"/>
    <property type="match status" value="1"/>
</dbReference>
<dbReference type="FunFam" id="2.10.90.10:FF:000003">
    <property type="entry name" value="Bone morphogenetic protein 5"/>
    <property type="match status" value="1"/>
</dbReference>
<dbReference type="FunFam" id="2.60.120.970:FF:000008">
    <property type="entry name" value="Bone morphogenetic protein 7"/>
    <property type="match status" value="1"/>
</dbReference>
<dbReference type="Gene3D" id="2.60.120.970">
    <property type="match status" value="1"/>
</dbReference>
<dbReference type="Gene3D" id="2.10.90.10">
    <property type="entry name" value="Cystine-knot cytokines"/>
    <property type="match status" value="1"/>
</dbReference>
<dbReference type="InterPro" id="IPR029034">
    <property type="entry name" value="Cystine-knot_cytokine"/>
</dbReference>
<dbReference type="InterPro" id="IPR001839">
    <property type="entry name" value="TGF-b_C"/>
</dbReference>
<dbReference type="InterPro" id="IPR001111">
    <property type="entry name" value="TGF-b_propeptide"/>
</dbReference>
<dbReference type="InterPro" id="IPR015615">
    <property type="entry name" value="TGF-beta-rel"/>
</dbReference>
<dbReference type="InterPro" id="IPR017948">
    <property type="entry name" value="TGFb_CS"/>
</dbReference>
<dbReference type="PANTHER" id="PTHR11848:SF135">
    <property type="entry name" value="BONE MORPHOGENETIC PROTEIN 7"/>
    <property type="match status" value="1"/>
</dbReference>
<dbReference type="PANTHER" id="PTHR11848">
    <property type="entry name" value="TGF-BETA FAMILY"/>
    <property type="match status" value="1"/>
</dbReference>
<dbReference type="Pfam" id="PF00019">
    <property type="entry name" value="TGF_beta"/>
    <property type="match status" value="1"/>
</dbReference>
<dbReference type="Pfam" id="PF00688">
    <property type="entry name" value="TGFb_propeptide"/>
    <property type="match status" value="1"/>
</dbReference>
<dbReference type="SMART" id="SM00204">
    <property type="entry name" value="TGFB"/>
    <property type="match status" value="1"/>
</dbReference>
<dbReference type="SUPFAM" id="SSF57501">
    <property type="entry name" value="Cystine-knot cytokines"/>
    <property type="match status" value="1"/>
</dbReference>
<dbReference type="PROSITE" id="PS00250">
    <property type="entry name" value="TGF_BETA_1"/>
    <property type="match status" value="1"/>
</dbReference>
<dbReference type="PROSITE" id="PS51362">
    <property type="entry name" value="TGF_BETA_2"/>
    <property type="match status" value="1"/>
</dbReference>
<protein>
    <recommendedName>
        <fullName>Bone morphogenetic protein 7</fullName>
        <shortName>BMP-7</shortName>
    </recommendedName>
    <alternativeName>
        <fullName>Osteogenic protein 1</fullName>
        <shortName>OP-1</shortName>
    </alternativeName>
    <innName>Eptotermin alfa</innName>
</protein>
<feature type="signal peptide" evidence="2">
    <location>
        <begin position="1"/>
        <end position="29"/>
    </location>
</feature>
<feature type="propeptide" id="PRO_0000033876" evidence="6">
    <location>
        <begin position="30"/>
        <end position="292"/>
    </location>
</feature>
<feature type="chain" id="PRO_0000033877" description="Bone morphogenetic protein 7">
    <location>
        <begin position="293"/>
        <end position="431"/>
    </location>
</feature>
<feature type="region of interest" description="Disordered" evidence="3">
    <location>
        <begin position="291"/>
        <end position="311"/>
    </location>
</feature>
<feature type="glycosylation site" description="N-linked (GlcNAc...) asparagine" evidence="2">
    <location>
        <position position="187"/>
    </location>
</feature>
<feature type="glycosylation site" description="N-linked (GlcNAc...) asparagine" evidence="2">
    <location>
        <position position="302"/>
    </location>
</feature>
<feature type="glycosylation site" description="N-linked (GlcNAc...) asparagine" evidence="2">
    <location>
        <position position="321"/>
    </location>
</feature>
<feature type="glycosylation site" description="N-linked (GlcNAc...) asparagine" evidence="4 5">
    <location>
        <position position="372"/>
    </location>
</feature>
<feature type="disulfide bond">
    <location>
        <begin position="330"/>
        <end position="396"/>
    </location>
</feature>
<feature type="disulfide bond">
    <location>
        <begin position="359"/>
        <end position="428"/>
    </location>
</feature>
<feature type="disulfide bond">
    <location>
        <begin position="363"/>
        <end position="430"/>
    </location>
</feature>
<feature type="disulfide bond" description="Interchain">
    <location>
        <position position="395"/>
    </location>
</feature>
<feature type="sequence variant" id="VAR_064058" description="Found in a patient with unilateral microphthalmia, optic disk and chorioretinal coloboma, mild learning difficulties; dbSNP:rs376798352." evidence="8">
    <original>L</original>
    <variation>P</variation>
    <location>
        <position position="198"/>
    </location>
</feature>
<feature type="sequence variant" id="VAR_064059" description="In dbSNP:rs61733438." evidence="8">
    <original>N</original>
    <variation>S</variation>
    <location>
        <position position="321"/>
    </location>
</feature>
<feature type="strand" evidence="20">
    <location>
        <begin position="329"/>
        <end position="333"/>
    </location>
</feature>
<feature type="strand" evidence="20">
    <location>
        <begin position="336"/>
        <end position="338"/>
    </location>
</feature>
<feature type="helix" evidence="20">
    <location>
        <begin position="339"/>
        <end position="342"/>
    </location>
</feature>
<feature type="turn" evidence="20">
    <location>
        <begin position="345"/>
        <end position="347"/>
    </location>
</feature>
<feature type="strand" evidence="20">
    <location>
        <begin position="348"/>
        <end position="350"/>
    </location>
</feature>
<feature type="strand" evidence="20">
    <location>
        <begin position="352"/>
        <end position="355"/>
    </location>
</feature>
<feature type="strand" evidence="20">
    <location>
        <begin position="358"/>
        <end position="362"/>
    </location>
</feature>
<feature type="strand" evidence="21">
    <location>
        <begin position="365"/>
        <end position="368"/>
    </location>
</feature>
<feature type="helix" evidence="20">
    <location>
        <begin position="369"/>
        <end position="371"/>
    </location>
</feature>
<feature type="helix" evidence="20">
    <location>
        <begin position="375"/>
        <end position="386"/>
    </location>
</feature>
<feature type="turn" evidence="20">
    <location>
        <begin position="388"/>
        <end position="390"/>
    </location>
</feature>
<feature type="strand" evidence="20">
    <location>
        <begin position="396"/>
        <end position="409"/>
    </location>
</feature>
<feature type="helix" evidence="19">
    <location>
        <begin position="411"/>
        <end position="413"/>
    </location>
</feature>
<feature type="strand" evidence="20">
    <location>
        <begin position="415"/>
        <end position="430"/>
    </location>
</feature>
<keyword id="KW-0002">3D-structure</keyword>
<keyword id="KW-0891">Chondrogenesis</keyword>
<keyword id="KW-0202">Cytokine</keyword>
<keyword id="KW-0217">Developmental protein</keyword>
<keyword id="KW-0221">Differentiation</keyword>
<keyword id="KW-0903">Direct protein sequencing</keyword>
<keyword id="KW-1015">Disulfide bond</keyword>
<keyword id="KW-0325">Glycoprotein</keyword>
<keyword id="KW-0339">Growth factor</keyword>
<keyword id="KW-0892">Osteogenesis</keyword>
<keyword id="KW-0582">Pharmaceutical</keyword>
<keyword id="KW-1267">Proteomics identification</keyword>
<keyword id="KW-1185">Reference proteome</keyword>
<keyword id="KW-0964">Secreted</keyword>
<keyword id="KW-0732">Signal</keyword>